<protein>
    <recommendedName>
        <fullName evidence="1">Protein GrpE</fullName>
    </recommendedName>
    <alternativeName>
        <fullName evidence="1">HSP-70 cofactor</fullName>
    </alternativeName>
</protein>
<reference key="1">
    <citation type="submission" date="2006-01" db="EMBL/GenBank/DDBJ databases">
        <title>Complete sequence of Novosphingobium aromaticivorans DSM 12444.</title>
        <authorList>
            <consortium name="US DOE Joint Genome Institute"/>
            <person name="Copeland A."/>
            <person name="Lucas S."/>
            <person name="Lapidus A."/>
            <person name="Barry K."/>
            <person name="Detter J.C."/>
            <person name="Glavina T."/>
            <person name="Hammon N."/>
            <person name="Israni S."/>
            <person name="Pitluck S."/>
            <person name="Chain P."/>
            <person name="Malfatti S."/>
            <person name="Shin M."/>
            <person name="Vergez L."/>
            <person name="Schmutz J."/>
            <person name="Larimer F."/>
            <person name="Land M."/>
            <person name="Kyrpides N."/>
            <person name="Ivanova N."/>
            <person name="Fredrickson J."/>
            <person name="Balkwill D."/>
            <person name="Romine M.F."/>
            <person name="Richardson P."/>
        </authorList>
    </citation>
    <scope>NUCLEOTIDE SEQUENCE [LARGE SCALE GENOMIC DNA]</scope>
    <source>
        <strain>ATCC 700278 / DSM 12444 / CCUG 56034 / CIP 105152 / NBRC 16084 / F199</strain>
    </source>
</reference>
<organism>
    <name type="scientific">Novosphingobium aromaticivorans (strain ATCC 700278 / DSM 12444 / CCUG 56034 / CIP 105152 / NBRC 16084 / F199)</name>
    <dbReference type="NCBI Taxonomy" id="279238"/>
    <lineage>
        <taxon>Bacteria</taxon>
        <taxon>Pseudomonadati</taxon>
        <taxon>Pseudomonadota</taxon>
        <taxon>Alphaproteobacteria</taxon>
        <taxon>Sphingomonadales</taxon>
        <taxon>Sphingomonadaceae</taxon>
        <taxon>Novosphingobium</taxon>
    </lineage>
</organism>
<accession>Q2G6M5</accession>
<sequence length="186" mass="20587">MSDNDTRPTDAEVEAELKGVPEDMIDRTSDNDELAKLREELETARQDVLYAKAETQNVRRRMEKDVADARAYAATGFARDILSVADNLSRALESIPADLREDDKFKNLVAGLEATGREIEKVFSSHGIVRIAAMGLPLDPHQHQAMIEMPSADAEPGTVIQELQAGYMIKDRLLRPAMVAVAKKPD</sequence>
<name>GRPE_NOVAD</name>
<gene>
    <name evidence="1" type="primary">grpE</name>
    <name type="ordered locus">Saro_2059</name>
</gene>
<feature type="chain" id="PRO_1000164207" description="Protein GrpE">
    <location>
        <begin position="1"/>
        <end position="186"/>
    </location>
</feature>
<dbReference type="EMBL" id="CP000248">
    <property type="protein sequence ID" value="ABD26498.1"/>
    <property type="molecule type" value="Genomic_DNA"/>
</dbReference>
<dbReference type="RefSeq" id="WP_011445707.1">
    <property type="nucleotide sequence ID" value="NC_007794.1"/>
</dbReference>
<dbReference type="SMR" id="Q2G6M5"/>
<dbReference type="STRING" id="279238.Saro_2059"/>
<dbReference type="KEGG" id="nar:Saro_2059"/>
<dbReference type="eggNOG" id="COG0576">
    <property type="taxonomic scope" value="Bacteria"/>
</dbReference>
<dbReference type="HOGENOM" id="CLU_057217_6_2_5"/>
<dbReference type="Proteomes" id="UP000009134">
    <property type="component" value="Chromosome"/>
</dbReference>
<dbReference type="GO" id="GO:0005737">
    <property type="term" value="C:cytoplasm"/>
    <property type="evidence" value="ECO:0007669"/>
    <property type="project" value="UniProtKB-SubCell"/>
</dbReference>
<dbReference type="GO" id="GO:0000774">
    <property type="term" value="F:adenyl-nucleotide exchange factor activity"/>
    <property type="evidence" value="ECO:0007669"/>
    <property type="project" value="InterPro"/>
</dbReference>
<dbReference type="GO" id="GO:0042803">
    <property type="term" value="F:protein homodimerization activity"/>
    <property type="evidence" value="ECO:0007669"/>
    <property type="project" value="InterPro"/>
</dbReference>
<dbReference type="GO" id="GO:0051087">
    <property type="term" value="F:protein-folding chaperone binding"/>
    <property type="evidence" value="ECO:0007669"/>
    <property type="project" value="InterPro"/>
</dbReference>
<dbReference type="GO" id="GO:0051082">
    <property type="term" value="F:unfolded protein binding"/>
    <property type="evidence" value="ECO:0007669"/>
    <property type="project" value="TreeGrafter"/>
</dbReference>
<dbReference type="GO" id="GO:0006457">
    <property type="term" value="P:protein folding"/>
    <property type="evidence" value="ECO:0007669"/>
    <property type="project" value="InterPro"/>
</dbReference>
<dbReference type="CDD" id="cd00446">
    <property type="entry name" value="GrpE"/>
    <property type="match status" value="1"/>
</dbReference>
<dbReference type="FunFam" id="2.30.22.10:FF:000001">
    <property type="entry name" value="Protein GrpE"/>
    <property type="match status" value="1"/>
</dbReference>
<dbReference type="Gene3D" id="3.90.20.20">
    <property type="match status" value="1"/>
</dbReference>
<dbReference type="Gene3D" id="2.30.22.10">
    <property type="entry name" value="Head domain of nucleotide exchange factor GrpE"/>
    <property type="match status" value="1"/>
</dbReference>
<dbReference type="HAMAP" id="MF_01151">
    <property type="entry name" value="GrpE"/>
    <property type="match status" value="1"/>
</dbReference>
<dbReference type="InterPro" id="IPR000740">
    <property type="entry name" value="GrpE"/>
</dbReference>
<dbReference type="InterPro" id="IPR013805">
    <property type="entry name" value="GrpE_coiled_coil"/>
</dbReference>
<dbReference type="InterPro" id="IPR009012">
    <property type="entry name" value="GrpE_head"/>
</dbReference>
<dbReference type="NCBIfam" id="NF010738">
    <property type="entry name" value="PRK14140.1"/>
    <property type="match status" value="1"/>
</dbReference>
<dbReference type="PANTHER" id="PTHR21237">
    <property type="entry name" value="GRPE PROTEIN"/>
    <property type="match status" value="1"/>
</dbReference>
<dbReference type="PANTHER" id="PTHR21237:SF23">
    <property type="entry name" value="GRPE PROTEIN HOMOLOG, MITOCHONDRIAL"/>
    <property type="match status" value="1"/>
</dbReference>
<dbReference type="Pfam" id="PF01025">
    <property type="entry name" value="GrpE"/>
    <property type="match status" value="1"/>
</dbReference>
<dbReference type="PRINTS" id="PR00773">
    <property type="entry name" value="GRPEPROTEIN"/>
</dbReference>
<dbReference type="SUPFAM" id="SSF58014">
    <property type="entry name" value="Coiled-coil domain of nucleotide exchange factor GrpE"/>
    <property type="match status" value="1"/>
</dbReference>
<dbReference type="SUPFAM" id="SSF51064">
    <property type="entry name" value="Head domain of nucleotide exchange factor GrpE"/>
    <property type="match status" value="1"/>
</dbReference>
<dbReference type="PROSITE" id="PS01071">
    <property type="entry name" value="GRPE"/>
    <property type="match status" value="1"/>
</dbReference>
<comment type="function">
    <text evidence="1">Participates actively in the response to hyperosmotic and heat shock by preventing the aggregation of stress-denatured proteins, in association with DnaK and GrpE. It is the nucleotide exchange factor for DnaK and may function as a thermosensor. Unfolded proteins bind initially to DnaJ; upon interaction with the DnaJ-bound protein, DnaK hydrolyzes its bound ATP, resulting in the formation of a stable complex. GrpE releases ADP from DnaK; ATP binding to DnaK triggers the release of the substrate protein, thus completing the reaction cycle. Several rounds of ATP-dependent interactions between DnaJ, DnaK and GrpE are required for fully efficient folding.</text>
</comment>
<comment type="subunit">
    <text evidence="1">Homodimer.</text>
</comment>
<comment type="subcellular location">
    <subcellularLocation>
        <location evidence="1">Cytoplasm</location>
    </subcellularLocation>
</comment>
<comment type="similarity">
    <text evidence="1">Belongs to the GrpE family.</text>
</comment>
<proteinExistence type="inferred from homology"/>
<keyword id="KW-0143">Chaperone</keyword>
<keyword id="KW-0963">Cytoplasm</keyword>
<keyword id="KW-1185">Reference proteome</keyword>
<keyword id="KW-0346">Stress response</keyword>
<evidence type="ECO:0000255" key="1">
    <source>
        <dbReference type="HAMAP-Rule" id="MF_01151"/>
    </source>
</evidence>